<protein>
    <recommendedName>
        <fullName evidence="1">1-(5-phosphoribosyl)-5-[(5-phosphoribosylamino)methylideneamino] imidazole-4-carboxamide isomerase</fullName>
        <ecNumber evidence="1">5.3.1.16</ecNumber>
    </recommendedName>
    <alternativeName>
        <fullName evidence="1">Phosphoribosylformimino-5-aminoimidazole carboxamide ribotide isomerase</fullName>
    </alternativeName>
</protein>
<keyword id="KW-0028">Amino-acid biosynthesis</keyword>
<keyword id="KW-0963">Cytoplasm</keyword>
<keyword id="KW-0368">Histidine biosynthesis</keyword>
<keyword id="KW-0413">Isomerase</keyword>
<name>HIS4_SALAI</name>
<gene>
    <name evidence="1" type="primary">hisA</name>
    <name type="ordered locus">Sare_3416</name>
</gene>
<comment type="catalytic activity">
    <reaction evidence="1">
        <text>1-(5-phospho-beta-D-ribosyl)-5-[(5-phospho-beta-D-ribosylamino)methylideneamino]imidazole-4-carboxamide = 5-[(5-phospho-1-deoxy-D-ribulos-1-ylimino)methylamino]-1-(5-phospho-beta-D-ribosyl)imidazole-4-carboxamide</text>
        <dbReference type="Rhea" id="RHEA:15469"/>
        <dbReference type="ChEBI" id="CHEBI:58435"/>
        <dbReference type="ChEBI" id="CHEBI:58525"/>
        <dbReference type="EC" id="5.3.1.16"/>
    </reaction>
</comment>
<comment type="pathway">
    <text evidence="1">Amino-acid biosynthesis; L-histidine biosynthesis; L-histidine from 5-phospho-alpha-D-ribose 1-diphosphate: step 4/9.</text>
</comment>
<comment type="subcellular location">
    <subcellularLocation>
        <location evidence="1">Cytoplasm</location>
    </subcellularLocation>
</comment>
<comment type="similarity">
    <text evidence="1">Belongs to the HisA/HisF family.</text>
</comment>
<organism>
    <name type="scientific">Salinispora arenicola (strain CNS-205)</name>
    <dbReference type="NCBI Taxonomy" id="391037"/>
    <lineage>
        <taxon>Bacteria</taxon>
        <taxon>Bacillati</taxon>
        <taxon>Actinomycetota</taxon>
        <taxon>Actinomycetes</taxon>
        <taxon>Micromonosporales</taxon>
        <taxon>Micromonosporaceae</taxon>
        <taxon>Salinispora</taxon>
    </lineage>
</organism>
<sequence>MSLTLLPAVDVADGQAVRLVQGAAGSETAYGDPLDAALAWQRDGAEWIHLVDLDAAFGRGSNADLLADVVRQLDVRVELSGGVRDDESLRAALATGATRVNIGTAALEDPLWCDRVCGEYGDRVAIGLDVRGRTLSARGWTRDGGDLWEVLERLDRAGASRYVVTDITKDGTMRGPNLELLREVCARTNAPVIASGGVSTLADLRALAALEPAGVEGVIAGKALYAGAFTVAEALRTLADA</sequence>
<accession>A8LX58</accession>
<reference key="1">
    <citation type="submission" date="2007-10" db="EMBL/GenBank/DDBJ databases">
        <title>Complete sequence of Salinispora arenicola CNS-205.</title>
        <authorList>
            <consortium name="US DOE Joint Genome Institute"/>
            <person name="Copeland A."/>
            <person name="Lucas S."/>
            <person name="Lapidus A."/>
            <person name="Barry K."/>
            <person name="Glavina del Rio T."/>
            <person name="Dalin E."/>
            <person name="Tice H."/>
            <person name="Pitluck S."/>
            <person name="Foster B."/>
            <person name="Schmutz J."/>
            <person name="Larimer F."/>
            <person name="Land M."/>
            <person name="Hauser L."/>
            <person name="Kyrpides N."/>
            <person name="Ivanova N."/>
            <person name="Jensen P.R."/>
            <person name="Moore B.S."/>
            <person name="Penn K."/>
            <person name="Jenkins C."/>
            <person name="Udwary D."/>
            <person name="Xiang L."/>
            <person name="Gontang E."/>
            <person name="Richardson P."/>
        </authorList>
    </citation>
    <scope>NUCLEOTIDE SEQUENCE [LARGE SCALE GENOMIC DNA]</scope>
    <source>
        <strain>CNS-205</strain>
    </source>
</reference>
<dbReference type="EC" id="5.3.1.16" evidence="1"/>
<dbReference type="EMBL" id="CP000850">
    <property type="protein sequence ID" value="ABV99218.1"/>
    <property type="molecule type" value="Genomic_DNA"/>
</dbReference>
<dbReference type="SMR" id="A8LX58"/>
<dbReference type="STRING" id="391037.Sare_3416"/>
<dbReference type="KEGG" id="saq:Sare_3416"/>
<dbReference type="PATRIC" id="fig|391037.6.peg.3444"/>
<dbReference type="eggNOG" id="COG0106">
    <property type="taxonomic scope" value="Bacteria"/>
</dbReference>
<dbReference type="HOGENOM" id="CLU_048577_1_1_11"/>
<dbReference type="OrthoDB" id="9807749at2"/>
<dbReference type="UniPathway" id="UPA00031">
    <property type="reaction ID" value="UER00009"/>
</dbReference>
<dbReference type="GO" id="GO:0005737">
    <property type="term" value="C:cytoplasm"/>
    <property type="evidence" value="ECO:0007669"/>
    <property type="project" value="UniProtKB-SubCell"/>
</dbReference>
<dbReference type="GO" id="GO:0003949">
    <property type="term" value="F:1-(5-phosphoribosyl)-5-[(5-phosphoribosylamino)methylideneamino]imidazole-4-carboxamide isomerase activity"/>
    <property type="evidence" value="ECO:0007669"/>
    <property type="project" value="UniProtKB-UniRule"/>
</dbReference>
<dbReference type="GO" id="GO:0004640">
    <property type="term" value="F:phosphoribosylanthranilate isomerase activity"/>
    <property type="evidence" value="ECO:0007669"/>
    <property type="project" value="InterPro"/>
</dbReference>
<dbReference type="GO" id="GO:0000105">
    <property type="term" value="P:L-histidine biosynthetic process"/>
    <property type="evidence" value="ECO:0007669"/>
    <property type="project" value="UniProtKB-UniRule"/>
</dbReference>
<dbReference type="GO" id="GO:0000162">
    <property type="term" value="P:L-tryptophan biosynthetic process"/>
    <property type="evidence" value="ECO:0007669"/>
    <property type="project" value="InterPro"/>
</dbReference>
<dbReference type="CDD" id="cd04732">
    <property type="entry name" value="HisA"/>
    <property type="match status" value="1"/>
</dbReference>
<dbReference type="FunFam" id="3.20.20.70:FF:000009">
    <property type="entry name" value="1-(5-phosphoribosyl)-5-[(5-phosphoribosylamino)methylideneamino] imidazole-4-carboxamide isomerase"/>
    <property type="match status" value="1"/>
</dbReference>
<dbReference type="Gene3D" id="3.20.20.70">
    <property type="entry name" value="Aldolase class I"/>
    <property type="match status" value="1"/>
</dbReference>
<dbReference type="HAMAP" id="MF_01014">
    <property type="entry name" value="HisA"/>
    <property type="match status" value="1"/>
</dbReference>
<dbReference type="InterPro" id="IPR013785">
    <property type="entry name" value="Aldolase_TIM"/>
</dbReference>
<dbReference type="InterPro" id="IPR006062">
    <property type="entry name" value="His_biosynth"/>
</dbReference>
<dbReference type="InterPro" id="IPR010188">
    <property type="entry name" value="HisA/PriA_Actinobacteria"/>
</dbReference>
<dbReference type="InterPro" id="IPR044524">
    <property type="entry name" value="Isoase_HisA-like"/>
</dbReference>
<dbReference type="InterPro" id="IPR023016">
    <property type="entry name" value="Isoase_HisA-like_bact"/>
</dbReference>
<dbReference type="InterPro" id="IPR011060">
    <property type="entry name" value="RibuloseP-bd_barrel"/>
</dbReference>
<dbReference type="NCBIfam" id="TIGR01919">
    <property type="entry name" value="hisA-trpF"/>
    <property type="match status" value="1"/>
</dbReference>
<dbReference type="PANTHER" id="PTHR43090">
    <property type="entry name" value="1-(5-PHOSPHORIBOSYL)-5-[(5-PHOSPHORIBOSYLAMINO)METHYLIDENEAMINO] IMIDAZOLE-4-CARBOXAMIDE ISOMERASE"/>
    <property type="match status" value="1"/>
</dbReference>
<dbReference type="PANTHER" id="PTHR43090:SF2">
    <property type="entry name" value="1-(5-PHOSPHORIBOSYL)-5-[(5-PHOSPHORIBOSYLAMINO)METHYLIDENEAMINO] IMIDAZOLE-4-CARBOXAMIDE ISOMERASE"/>
    <property type="match status" value="1"/>
</dbReference>
<dbReference type="Pfam" id="PF00977">
    <property type="entry name" value="His_biosynth"/>
    <property type="match status" value="1"/>
</dbReference>
<dbReference type="SUPFAM" id="SSF51366">
    <property type="entry name" value="Ribulose-phoshate binding barrel"/>
    <property type="match status" value="1"/>
</dbReference>
<feature type="chain" id="PRO_1000084108" description="1-(5-phosphoribosyl)-5-[(5-phosphoribosylamino)methylideneamino] imidazole-4-carboxamide isomerase">
    <location>
        <begin position="1"/>
        <end position="241"/>
    </location>
</feature>
<feature type="active site" description="Proton acceptor" evidence="1">
    <location>
        <position position="10"/>
    </location>
</feature>
<feature type="active site" description="Proton donor" evidence="1">
    <location>
        <position position="129"/>
    </location>
</feature>
<proteinExistence type="inferred from homology"/>
<evidence type="ECO:0000255" key="1">
    <source>
        <dbReference type="HAMAP-Rule" id="MF_01014"/>
    </source>
</evidence>